<sequence length="134" mass="15954">MDLRTGEYITAHQATSGVYTFGITNPLYFTITRHNQNPFNNKYNTLTFQIRFNHNLRKELGIHKCFLNFHIWTTLQSPTGHFLRVFKYQVCKYLNNLGVISLNNVVRAVDYVLFHVFERTIDVTENHEIKFNFY</sequence>
<accession>P27266</accession>
<name>REN_TYCSV</name>
<dbReference type="EMBL" id="X61153">
    <property type="protein sequence ID" value="CAA43463.1"/>
    <property type="molecule type" value="Genomic_DNA"/>
</dbReference>
<dbReference type="PIR" id="S22590">
    <property type="entry name" value="S22590"/>
</dbReference>
<dbReference type="RefSeq" id="NP_620739.1">
    <property type="nucleotide sequence ID" value="NC_003828.1"/>
</dbReference>
<dbReference type="GeneID" id="944422"/>
<dbReference type="KEGG" id="vg:944422"/>
<dbReference type="OrthoDB" id="13855at10239"/>
<dbReference type="Proteomes" id="UP000002323">
    <property type="component" value="Genome"/>
</dbReference>
<dbReference type="GO" id="GO:0016032">
    <property type="term" value="P:viral process"/>
    <property type="evidence" value="ECO:0007669"/>
    <property type="project" value="InterPro"/>
</dbReference>
<dbReference type="InterPro" id="IPR000657">
    <property type="entry name" value="Gemini_AL3"/>
</dbReference>
<dbReference type="Pfam" id="PF01407">
    <property type="entry name" value="Gemini_AL3"/>
    <property type="match status" value="1"/>
</dbReference>
<dbReference type="PRINTS" id="PR00231">
    <property type="entry name" value="GEMCOATAL3"/>
</dbReference>
<protein>
    <recommendedName>
        <fullName>Replication enhancer protein</fullName>
        <shortName>REn</shortName>
    </recommendedName>
    <alternativeName>
        <fullName>Protein C3</fullName>
    </alternativeName>
    <alternativeName>
        <fullName>Protein L3</fullName>
    </alternativeName>
</protein>
<comment type="function">
    <text evidence="1">Increases viral DNA accumulation. Enhances infectivity and symptom expression (By similarity).</text>
</comment>
<comment type="subunit">
    <text evidence="1">Homooligomer. Interacts with the replication-associated protein (REP). Interacts with host proliferating cell nuclear antigen (PCNA). Interacts with host retinoblastoma-related protein 1 (RBR1), and may thereby deregulate the host cell cycle. Oligomerization and interaction with PCNA are necessary for optimal replication enhancement (By similarity).</text>
</comment>
<comment type="similarity">
    <text evidence="2">Belongs to the geminiviridae replication enhancer protein family.</text>
</comment>
<evidence type="ECO:0000250" key="1"/>
<evidence type="ECO:0000305" key="2"/>
<reference key="1">
    <citation type="journal article" date="1991" name="Nucleic Acids Res.">
        <title>Tomato yellow leaf curl virus from Sardinia is a whitefly-transmitted monopartite geminivirus.</title>
        <authorList>
            <person name="Kheyr-Pour A."/>
            <person name="Bendahmane M."/>
            <person name="Matzeit V."/>
            <person name="Accotto G.P."/>
            <person name="Crespi S."/>
            <person name="Gronenborn B."/>
        </authorList>
    </citation>
    <scope>NUCLEOTIDE SEQUENCE [GENOMIC DNA]</scope>
</reference>
<reference key="2">
    <citation type="journal article" date="2003" name="Virology">
        <title>Dual interaction of plant PCNA with geminivirus replication accessory protein (Ren) and viral replication protein (Rep).</title>
        <authorList>
            <person name="Castillo A.G."/>
            <person name="Collinet D."/>
            <person name="Deret S."/>
            <person name="Kashoggi A."/>
            <person name="Bejarano E.R."/>
        </authorList>
    </citation>
    <scope>INTERACTION WITH SOLANUM LYCOPERSICUM PCNA</scope>
</reference>
<feature type="chain" id="PRO_0000222249" description="Replication enhancer protein">
    <location>
        <begin position="1"/>
        <end position="134"/>
    </location>
</feature>
<proteinExistence type="evidence at protein level"/>
<organism>
    <name type="scientific">Tomato yellow leaf curl Sardinia virus</name>
    <name type="common">TYLCSV</name>
    <dbReference type="NCBI Taxonomy" id="123735"/>
    <lineage>
        <taxon>Viruses</taxon>
        <taxon>Monodnaviria</taxon>
        <taxon>Shotokuvirae</taxon>
        <taxon>Cressdnaviricota</taxon>
        <taxon>Repensiviricetes</taxon>
        <taxon>Geplafuvirales</taxon>
        <taxon>Geminiviridae</taxon>
        <taxon>Begomovirus</taxon>
    </lineage>
</organism>
<gene>
    <name type="ORF">C3</name>
    <name type="ORF">L3</name>
</gene>
<keyword id="KW-0945">Host-virus interaction</keyword>
<keyword id="KW-1185">Reference proteome</keyword>
<organismHost>
    <name type="scientific">Capsicum annuum</name>
    <name type="common">Capsicum pepper</name>
    <dbReference type="NCBI Taxonomy" id="4072"/>
</organismHost>
<organismHost>
    <name type="scientific">Cynanchum acutum</name>
    <dbReference type="NCBI Taxonomy" id="185024"/>
</organismHost>
<organismHost>
    <name type="scientific">Malva parviflora</name>
    <name type="common">Little mallow</name>
    <name type="synonym">Cheeseweed mallow</name>
    <dbReference type="NCBI Taxonomy" id="145753"/>
</organismHost>
<organismHost>
    <name type="scientific">Sinapis arvensis</name>
    <dbReference type="NCBI Taxonomy" id="29728"/>
</organismHost>
<organismHost>
    <name type="scientific">Solanum lycopersicum</name>
    <name type="common">Tomato</name>
    <name type="synonym">Lycopersicon esculentum</name>
    <dbReference type="NCBI Taxonomy" id="4081"/>
</organismHost>
<organismHost>
    <name type="scientific">Solanum nigrum</name>
    <name type="common">Black nightshade</name>
    <dbReference type="NCBI Taxonomy" id="4112"/>
</organismHost>